<comment type="alternative products">
    <event type="alternative splicing"/>
    <isoform>
        <id>Q49AM3-1</id>
        <name>1</name>
        <sequence type="displayed"/>
    </isoform>
    <isoform>
        <id>Q49AM3-2</id>
        <name>2</name>
        <sequence type="described" ref="VSP_023990 VSP_023991"/>
    </isoform>
</comment>
<name>TTC31_HUMAN</name>
<keyword id="KW-0025">Alternative splicing</keyword>
<keyword id="KW-0175">Coiled coil</keyword>
<keyword id="KW-0597">Phosphoprotein</keyword>
<keyword id="KW-1267">Proteomics identification</keyword>
<keyword id="KW-1185">Reference proteome</keyword>
<keyword id="KW-0677">Repeat</keyword>
<keyword id="KW-0802">TPR repeat</keyword>
<reference key="1">
    <citation type="journal article" date="2004" name="Nat. Genet.">
        <title>Complete sequencing and characterization of 21,243 full-length human cDNAs.</title>
        <authorList>
            <person name="Ota T."/>
            <person name="Suzuki Y."/>
            <person name="Nishikawa T."/>
            <person name="Otsuki T."/>
            <person name="Sugiyama T."/>
            <person name="Irie R."/>
            <person name="Wakamatsu A."/>
            <person name="Hayashi K."/>
            <person name="Sato H."/>
            <person name="Nagai K."/>
            <person name="Kimura K."/>
            <person name="Makita H."/>
            <person name="Sekine M."/>
            <person name="Obayashi M."/>
            <person name="Nishi T."/>
            <person name="Shibahara T."/>
            <person name="Tanaka T."/>
            <person name="Ishii S."/>
            <person name="Yamamoto J."/>
            <person name="Saito K."/>
            <person name="Kawai Y."/>
            <person name="Isono Y."/>
            <person name="Nakamura Y."/>
            <person name="Nagahari K."/>
            <person name="Murakami K."/>
            <person name="Yasuda T."/>
            <person name="Iwayanagi T."/>
            <person name="Wagatsuma M."/>
            <person name="Shiratori A."/>
            <person name="Sudo H."/>
            <person name="Hosoiri T."/>
            <person name="Kaku Y."/>
            <person name="Kodaira H."/>
            <person name="Kondo H."/>
            <person name="Sugawara M."/>
            <person name="Takahashi M."/>
            <person name="Kanda K."/>
            <person name="Yokoi T."/>
            <person name="Furuya T."/>
            <person name="Kikkawa E."/>
            <person name="Omura Y."/>
            <person name="Abe K."/>
            <person name="Kamihara K."/>
            <person name="Katsuta N."/>
            <person name="Sato K."/>
            <person name="Tanikawa M."/>
            <person name="Yamazaki M."/>
            <person name="Ninomiya K."/>
            <person name="Ishibashi T."/>
            <person name="Yamashita H."/>
            <person name="Murakawa K."/>
            <person name="Fujimori K."/>
            <person name="Tanai H."/>
            <person name="Kimata M."/>
            <person name="Watanabe M."/>
            <person name="Hiraoka S."/>
            <person name="Chiba Y."/>
            <person name="Ishida S."/>
            <person name="Ono Y."/>
            <person name="Takiguchi S."/>
            <person name="Watanabe S."/>
            <person name="Yosida M."/>
            <person name="Hotuta T."/>
            <person name="Kusano J."/>
            <person name="Kanehori K."/>
            <person name="Takahashi-Fujii A."/>
            <person name="Hara H."/>
            <person name="Tanase T.-O."/>
            <person name="Nomura Y."/>
            <person name="Togiya S."/>
            <person name="Komai F."/>
            <person name="Hara R."/>
            <person name="Takeuchi K."/>
            <person name="Arita M."/>
            <person name="Imose N."/>
            <person name="Musashino K."/>
            <person name="Yuuki H."/>
            <person name="Oshima A."/>
            <person name="Sasaki N."/>
            <person name="Aotsuka S."/>
            <person name="Yoshikawa Y."/>
            <person name="Matsunawa H."/>
            <person name="Ichihara T."/>
            <person name="Shiohata N."/>
            <person name="Sano S."/>
            <person name="Moriya S."/>
            <person name="Momiyama H."/>
            <person name="Satoh N."/>
            <person name="Takami S."/>
            <person name="Terashima Y."/>
            <person name="Suzuki O."/>
            <person name="Nakagawa S."/>
            <person name="Senoh A."/>
            <person name="Mizoguchi H."/>
            <person name="Goto Y."/>
            <person name="Shimizu F."/>
            <person name="Wakebe H."/>
            <person name="Hishigaki H."/>
            <person name="Watanabe T."/>
            <person name="Sugiyama A."/>
            <person name="Takemoto M."/>
            <person name="Kawakami B."/>
            <person name="Yamazaki M."/>
            <person name="Watanabe K."/>
            <person name="Kumagai A."/>
            <person name="Itakura S."/>
            <person name="Fukuzumi Y."/>
            <person name="Fujimori Y."/>
            <person name="Komiyama M."/>
            <person name="Tashiro H."/>
            <person name="Tanigami A."/>
            <person name="Fujiwara T."/>
            <person name="Ono T."/>
            <person name="Yamada K."/>
            <person name="Fujii Y."/>
            <person name="Ozaki K."/>
            <person name="Hirao M."/>
            <person name="Ohmori Y."/>
            <person name="Kawabata A."/>
            <person name="Hikiji T."/>
            <person name="Kobatake N."/>
            <person name="Inagaki H."/>
            <person name="Ikema Y."/>
            <person name="Okamoto S."/>
            <person name="Okitani R."/>
            <person name="Kawakami T."/>
            <person name="Noguchi S."/>
            <person name="Itoh T."/>
            <person name="Shigeta K."/>
            <person name="Senba T."/>
            <person name="Matsumura K."/>
            <person name="Nakajima Y."/>
            <person name="Mizuno T."/>
            <person name="Morinaga M."/>
            <person name="Sasaki M."/>
            <person name="Togashi T."/>
            <person name="Oyama M."/>
            <person name="Hata H."/>
            <person name="Watanabe M."/>
            <person name="Komatsu T."/>
            <person name="Mizushima-Sugano J."/>
            <person name="Satoh T."/>
            <person name="Shirai Y."/>
            <person name="Takahashi Y."/>
            <person name="Nakagawa K."/>
            <person name="Okumura K."/>
            <person name="Nagase T."/>
            <person name="Nomura N."/>
            <person name="Kikuchi H."/>
            <person name="Masuho Y."/>
            <person name="Yamashita R."/>
            <person name="Nakai K."/>
            <person name="Yada T."/>
            <person name="Nakamura Y."/>
            <person name="Ohara O."/>
            <person name="Isogai T."/>
            <person name="Sugano S."/>
        </authorList>
    </citation>
    <scope>NUCLEOTIDE SEQUENCE [LARGE SCALE MRNA] (ISOFORM 2)</scope>
</reference>
<reference key="2">
    <citation type="journal article" date="2005" name="Nature">
        <title>Generation and annotation of the DNA sequences of human chromosomes 2 and 4.</title>
        <authorList>
            <person name="Hillier L.W."/>
            <person name="Graves T.A."/>
            <person name="Fulton R.S."/>
            <person name="Fulton L.A."/>
            <person name="Pepin K.H."/>
            <person name="Minx P."/>
            <person name="Wagner-McPherson C."/>
            <person name="Layman D."/>
            <person name="Wylie K."/>
            <person name="Sekhon M."/>
            <person name="Becker M.C."/>
            <person name="Fewell G.A."/>
            <person name="Delehaunty K.D."/>
            <person name="Miner T.L."/>
            <person name="Nash W.E."/>
            <person name="Kremitzki C."/>
            <person name="Oddy L."/>
            <person name="Du H."/>
            <person name="Sun H."/>
            <person name="Bradshaw-Cordum H."/>
            <person name="Ali J."/>
            <person name="Carter J."/>
            <person name="Cordes M."/>
            <person name="Harris A."/>
            <person name="Isak A."/>
            <person name="van Brunt A."/>
            <person name="Nguyen C."/>
            <person name="Du F."/>
            <person name="Courtney L."/>
            <person name="Kalicki J."/>
            <person name="Ozersky P."/>
            <person name="Abbott S."/>
            <person name="Armstrong J."/>
            <person name="Belter E.A."/>
            <person name="Caruso L."/>
            <person name="Cedroni M."/>
            <person name="Cotton M."/>
            <person name="Davidson T."/>
            <person name="Desai A."/>
            <person name="Elliott G."/>
            <person name="Erb T."/>
            <person name="Fronick C."/>
            <person name="Gaige T."/>
            <person name="Haakenson W."/>
            <person name="Haglund K."/>
            <person name="Holmes A."/>
            <person name="Harkins R."/>
            <person name="Kim K."/>
            <person name="Kruchowski S.S."/>
            <person name="Strong C.M."/>
            <person name="Grewal N."/>
            <person name="Goyea E."/>
            <person name="Hou S."/>
            <person name="Levy A."/>
            <person name="Martinka S."/>
            <person name="Mead K."/>
            <person name="McLellan M.D."/>
            <person name="Meyer R."/>
            <person name="Randall-Maher J."/>
            <person name="Tomlinson C."/>
            <person name="Dauphin-Kohlberg S."/>
            <person name="Kozlowicz-Reilly A."/>
            <person name="Shah N."/>
            <person name="Swearengen-Shahid S."/>
            <person name="Snider J."/>
            <person name="Strong J.T."/>
            <person name="Thompson J."/>
            <person name="Yoakum M."/>
            <person name="Leonard S."/>
            <person name="Pearman C."/>
            <person name="Trani L."/>
            <person name="Radionenko M."/>
            <person name="Waligorski J.E."/>
            <person name="Wang C."/>
            <person name="Rock S.M."/>
            <person name="Tin-Wollam A.-M."/>
            <person name="Maupin R."/>
            <person name="Latreille P."/>
            <person name="Wendl M.C."/>
            <person name="Yang S.-P."/>
            <person name="Pohl C."/>
            <person name="Wallis J.W."/>
            <person name="Spieth J."/>
            <person name="Bieri T.A."/>
            <person name="Berkowicz N."/>
            <person name="Nelson J.O."/>
            <person name="Osborne J."/>
            <person name="Ding L."/>
            <person name="Meyer R."/>
            <person name="Sabo A."/>
            <person name="Shotland Y."/>
            <person name="Sinha P."/>
            <person name="Wohldmann P.E."/>
            <person name="Cook L.L."/>
            <person name="Hickenbotham M.T."/>
            <person name="Eldred J."/>
            <person name="Williams D."/>
            <person name="Jones T.A."/>
            <person name="She X."/>
            <person name="Ciccarelli F.D."/>
            <person name="Izaurralde E."/>
            <person name="Taylor J."/>
            <person name="Schmutz J."/>
            <person name="Myers R.M."/>
            <person name="Cox D.R."/>
            <person name="Huang X."/>
            <person name="McPherson J.D."/>
            <person name="Mardis E.R."/>
            <person name="Clifton S.W."/>
            <person name="Warren W.C."/>
            <person name="Chinwalla A.T."/>
            <person name="Eddy S.R."/>
            <person name="Marra M.A."/>
            <person name="Ovcharenko I."/>
            <person name="Furey T.S."/>
            <person name="Miller W."/>
            <person name="Eichler E.E."/>
            <person name="Bork P."/>
            <person name="Suyama M."/>
            <person name="Torrents D."/>
            <person name="Waterston R.H."/>
            <person name="Wilson R.K."/>
        </authorList>
    </citation>
    <scope>NUCLEOTIDE SEQUENCE [LARGE SCALE GENOMIC DNA]</scope>
</reference>
<reference key="3">
    <citation type="journal article" date="2004" name="Genome Res.">
        <title>The status, quality, and expansion of the NIH full-length cDNA project: the Mammalian Gene Collection (MGC).</title>
        <authorList>
            <consortium name="The MGC Project Team"/>
        </authorList>
    </citation>
    <scope>NUCLEOTIDE SEQUENCE [LARGE SCALE MRNA] (ISOFORMS 1 AND 2)</scope>
    <scope>VARIANT VAL-28</scope>
    <source>
        <tissue>Testis</tissue>
    </source>
</reference>
<reference key="4">
    <citation type="submission" date="2005-04" db="EMBL/GenBank/DDBJ databases">
        <authorList>
            <person name="Suzuki Y."/>
            <person name="Sugano S."/>
            <person name="Totoki Y."/>
            <person name="Toyoda A."/>
            <person name="Takeda T."/>
            <person name="Sakaki Y."/>
            <person name="Tanaka A."/>
            <person name="Yokoyama S."/>
        </authorList>
    </citation>
    <scope>NUCLEOTIDE SEQUENCE [LARGE SCALE MRNA] OF 1-369</scope>
    <source>
        <tissue>Testis</tissue>
    </source>
</reference>
<reference key="5">
    <citation type="journal article" date="2013" name="J. Proteome Res.">
        <title>Toward a comprehensive characterization of a human cancer cell phosphoproteome.</title>
        <authorList>
            <person name="Zhou H."/>
            <person name="Di Palma S."/>
            <person name="Preisinger C."/>
            <person name="Peng M."/>
            <person name="Polat A.N."/>
            <person name="Heck A.J."/>
            <person name="Mohammed S."/>
        </authorList>
    </citation>
    <scope>PHOSPHORYLATION [LARGE SCALE ANALYSIS] AT SER-278</scope>
    <scope>IDENTIFICATION BY MASS SPECTROMETRY [LARGE SCALE ANALYSIS]</scope>
    <source>
        <tissue>Cervix carcinoma</tissue>
        <tissue>Erythroleukemia</tissue>
    </source>
</reference>
<gene>
    <name type="primary">TTC31</name>
</gene>
<proteinExistence type="evidence at protein level"/>
<organism>
    <name type="scientific">Homo sapiens</name>
    <name type="common">Human</name>
    <dbReference type="NCBI Taxonomy" id="9606"/>
    <lineage>
        <taxon>Eukaryota</taxon>
        <taxon>Metazoa</taxon>
        <taxon>Chordata</taxon>
        <taxon>Craniata</taxon>
        <taxon>Vertebrata</taxon>
        <taxon>Euteleostomi</taxon>
        <taxon>Mammalia</taxon>
        <taxon>Eutheria</taxon>
        <taxon>Euarchontoglires</taxon>
        <taxon>Primates</taxon>
        <taxon>Haplorrhini</taxon>
        <taxon>Catarrhini</taxon>
        <taxon>Hominidae</taxon>
        <taxon>Homo</taxon>
    </lineage>
</organism>
<protein>
    <recommendedName>
        <fullName>Tetratricopeptide repeat protein 31</fullName>
        <shortName>TPR repeat protein 31</shortName>
    </recommendedName>
</protein>
<sequence length="519" mass="57105">MAPIPKTVGRIKLDCSLRPSCPLEVAAAPKLCKEFGPEDYGEEDIVDFLRRLVESDPQGLHRIHVDGSSGRLQLWHHDYLLGHLDDEGKSTGQSDRGKGAEGLGTYCGLRKSFLYPPQESEPCPQSPSASATFPSVSDSLLQVAMPQKLLVTEEEANRLAEELVAEEERMKQKAEKKRLKKKRQKERKRQERLEQYCGEPKASTTSDGDESPPSSPGNPVQGQCGEEEDSLDLSSTFVSLALRKVGDWPLSARREKGLNQEPQGRGLALQKMGQEEESPPREERPQQSPKVQASPGLLAAALQQSQELAKLGTSFAQNGFYHEAVVLFTQALKLNPQDHRLFGNRSFCHERLGQPAWALADAQVALTLRPGWPRGLFRLGKALMGLQRFREAAAVFQETLRGGSQPDAARELRSCLLHLTLQGQRGGICAPPLSPGALQPLPHAELAPSGLPSLRCPRSTALRSPGLSPLLHYPSCHRSHPNQPLSQTQSRRPHPLKPQDPSKGWDILGLGLQHLSQAR</sequence>
<dbReference type="EMBL" id="AK022850">
    <property type="protein sequence ID" value="BAB14272.1"/>
    <property type="molecule type" value="mRNA"/>
</dbReference>
<dbReference type="EMBL" id="AC005041">
    <property type="status" value="NOT_ANNOTATED_CDS"/>
    <property type="molecule type" value="Genomic_DNA"/>
</dbReference>
<dbReference type="EMBL" id="BC036017">
    <property type="protein sequence ID" value="AAH36017.1"/>
    <property type="molecule type" value="mRNA"/>
</dbReference>
<dbReference type="EMBL" id="BC096709">
    <property type="protein sequence ID" value="AAH96709.1"/>
    <property type="molecule type" value="mRNA"/>
</dbReference>
<dbReference type="EMBL" id="AK223355">
    <property type="protein sequence ID" value="BAD97075.1"/>
    <property type="molecule type" value="mRNA"/>
</dbReference>
<dbReference type="CCDS" id="CCDS42701.1">
    <molecule id="Q49AM3-1"/>
</dbReference>
<dbReference type="RefSeq" id="NP_071937.4">
    <molecule id="Q49AM3-1"/>
    <property type="nucleotide sequence ID" value="NM_022492.6"/>
</dbReference>
<dbReference type="SMR" id="Q49AM3"/>
<dbReference type="BioGRID" id="122175">
    <property type="interactions" value="25"/>
</dbReference>
<dbReference type="FunCoup" id="Q49AM3">
    <property type="interactions" value="520"/>
</dbReference>
<dbReference type="IntAct" id="Q49AM3">
    <property type="interactions" value="6"/>
</dbReference>
<dbReference type="STRING" id="9606.ENSP00000233623"/>
<dbReference type="iPTMnet" id="Q49AM3"/>
<dbReference type="PhosphoSitePlus" id="Q49AM3"/>
<dbReference type="BioMuta" id="TTC31"/>
<dbReference type="DMDM" id="215274203"/>
<dbReference type="jPOST" id="Q49AM3"/>
<dbReference type="MassIVE" id="Q49AM3"/>
<dbReference type="PaxDb" id="9606-ENSP00000233623"/>
<dbReference type="PeptideAtlas" id="Q49AM3"/>
<dbReference type="ProteomicsDB" id="62056">
    <molecule id="Q49AM3-1"/>
</dbReference>
<dbReference type="ProteomicsDB" id="62057">
    <molecule id="Q49AM3-2"/>
</dbReference>
<dbReference type="Pumba" id="Q49AM3"/>
<dbReference type="Antibodypedia" id="31535">
    <property type="antibodies" value="26 antibodies from 12 providers"/>
</dbReference>
<dbReference type="DNASU" id="64427"/>
<dbReference type="Ensembl" id="ENST00000233623.11">
    <molecule id="Q49AM3-1"/>
    <property type="protein sequence ID" value="ENSP00000233623.6"/>
    <property type="gene ID" value="ENSG00000115282.21"/>
</dbReference>
<dbReference type="Ensembl" id="ENST00000442235.6">
    <molecule id="Q49AM3-2"/>
    <property type="protein sequence ID" value="ENSP00000416823.3"/>
    <property type="gene ID" value="ENSG00000115282.21"/>
</dbReference>
<dbReference type="GeneID" id="64427"/>
<dbReference type="KEGG" id="hsa:64427"/>
<dbReference type="MANE-Select" id="ENST00000233623.11">
    <property type="protein sequence ID" value="ENSP00000233623.6"/>
    <property type="RefSeq nucleotide sequence ID" value="NM_022492.6"/>
    <property type="RefSeq protein sequence ID" value="NP_071937.4"/>
</dbReference>
<dbReference type="UCSC" id="uc002slt.3">
    <molecule id="Q49AM3-1"/>
    <property type="organism name" value="human"/>
</dbReference>
<dbReference type="AGR" id="HGNC:25759"/>
<dbReference type="CTD" id="64427"/>
<dbReference type="DisGeNET" id="64427"/>
<dbReference type="GeneCards" id="TTC31"/>
<dbReference type="HGNC" id="HGNC:25759">
    <property type="gene designation" value="TTC31"/>
</dbReference>
<dbReference type="HPA" id="ENSG00000115282">
    <property type="expression patterns" value="Low tissue specificity"/>
</dbReference>
<dbReference type="neXtProt" id="NX_Q49AM3"/>
<dbReference type="OpenTargets" id="ENSG00000115282"/>
<dbReference type="PharmGKB" id="PA145147843"/>
<dbReference type="VEuPathDB" id="HostDB:ENSG00000115282"/>
<dbReference type="eggNOG" id="KOG0548">
    <property type="taxonomic scope" value="Eukaryota"/>
</dbReference>
<dbReference type="GeneTree" id="ENSGT00940000161036"/>
<dbReference type="HOGENOM" id="CLU_039740_1_0_1"/>
<dbReference type="InParanoid" id="Q49AM3"/>
<dbReference type="OMA" id="HFCDEGK"/>
<dbReference type="OrthoDB" id="2423701at2759"/>
<dbReference type="PAN-GO" id="Q49AM3">
    <property type="GO annotations" value="0 GO annotations based on evolutionary models"/>
</dbReference>
<dbReference type="PhylomeDB" id="Q49AM3"/>
<dbReference type="TreeFam" id="TF341776"/>
<dbReference type="PathwayCommons" id="Q49AM3"/>
<dbReference type="SignaLink" id="Q49AM3"/>
<dbReference type="BioGRID-ORCS" id="64427">
    <property type="hits" value="8 hits in 1148 CRISPR screens"/>
</dbReference>
<dbReference type="ChiTaRS" id="TTC31">
    <property type="organism name" value="human"/>
</dbReference>
<dbReference type="GenomeRNAi" id="64427"/>
<dbReference type="Pharos" id="Q49AM3">
    <property type="development level" value="Tdark"/>
</dbReference>
<dbReference type="PRO" id="PR:Q49AM3"/>
<dbReference type="Proteomes" id="UP000005640">
    <property type="component" value="Chromosome 2"/>
</dbReference>
<dbReference type="RNAct" id="Q49AM3">
    <property type="molecule type" value="protein"/>
</dbReference>
<dbReference type="Bgee" id="ENSG00000115282">
    <property type="expression patterns" value="Expressed in sural nerve and 181 other cell types or tissues"/>
</dbReference>
<dbReference type="ExpressionAtlas" id="Q49AM3">
    <property type="expression patterns" value="baseline and differential"/>
</dbReference>
<dbReference type="Gene3D" id="1.25.40.10">
    <property type="entry name" value="Tetratricopeptide repeat domain"/>
    <property type="match status" value="1"/>
</dbReference>
<dbReference type="InterPro" id="IPR011990">
    <property type="entry name" value="TPR-like_helical_dom_sf"/>
</dbReference>
<dbReference type="InterPro" id="IPR019734">
    <property type="entry name" value="TPR_rpt"/>
</dbReference>
<dbReference type="PANTHER" id="PTHR47678">
    <property type="entry name" value="TETRATRICOPEPTIDE REPEAT PROTEIN 31"/>
    <property type="match status" value="1"/>
</dbReference>
<dbReference type="PANTHER" id="PTHR47678:SF1">
    <property type="entry name" value="TETRATRICOPEPTIDE REPEAT PROTEIN 31"/>
    <property type="match status" value="1"/>
</dbReference>
<dbReference type="Pfam" id="PF13432">
    <property type="entry name" value="TPR_16"/>
    <property type="match status" value="2"/>
</dbReference>
<dbReference type="SMART" id="SM00028">
    <property type="entry name" value="TPR"/>
    <property type="match status" value="3"/>
</dbReference>
<dbReference type="SUPFAM" id="SSF48452">
    <property type="entry name" value="TPR-like"/>
    <property type="match status" value="1"/>
</dbReference>
<dbReference type="PROSITE" id="PS50005">
    <property type="entry name" value="TPR"/>
    <property type="match status" value="2"/>
</dbReference>
<dbReference type="PROSITE" id="PS50293">
    <property type="entry name" value="TPR_REGION"/>
    <property type="match status" value="1"/>
</dbReference>
<evidence type="ECO:0000255" key="1"/>
<evidence type="ECO:0000256" key="2">
    <source>
        <dbReference type="SAM" id="MobiDB-lite"/>
    </source>
</evidence>
<evidence type="ECO:0000269" key="3">
    <source>
    </source>
</evidence>
<evidence type="ECO:0000303" key="4">
    <source>
    </source>
</evidence>
<evidence type="ECO:0000303" key="5">
    <source>
    </source>
</evidence>
<evidence type="ECO:0000305" key="6"/>
<evidence type="ECO:0007744" key="7">
    <source>
    </source>
</evidence>
<accession>Q49AM3</accession>
<accession>Q4KN40</accession>
<accession>Q53FD4</accession>
<accession>Q9H9F7</accession>
<feature type="chain" id="PRO_0000281149" description="Tetratricopeptide repeat protein 31">
    <location>
        <begin position="1"/>
        <end position="519"/>
    </location>
</feature>
<feature type="repeat" description="TPR 1">
    <location>
        <begin position="305"/>
        <end position="338"/>
    </location>
</feature>
<feature type="repeat" description="TPR 2">
    <location>
        <begin position="339"/>
        <end position="372"/>
    </location>
</feature>
<feature type="repeat" description="TPR 3">
    <location>
        <begin position="373"/>
        <end position="406"/>
    </location>
</feature>
<feature type="region of interest" description="Disordered" evidence="2">
    <location>
        <begin position="175"/>
        <end position="230"/>
    </location>
</feature>
<feature type="region of interest" description="Disordered" evidence="2">
    <location>
        <begin position="253"/>
        <end position="294"/>
    </location>
</feature>
<feature type="region of interest" description="Disordered" evidence="2">
    <location>
        <begin position="474"/>
        <end position="506"/>
    </location>
</feature>
<feature type="coiled-coil region" evidence="1">
    <location>
        <begin position="147"/>
        <end position="197"/>
    </location>
</feature>
<feature type="compositionally biased region" description="Basic residues" evidence="2">
    <location>
        <begin position="175"/>
        <end position="187"/>
    </location>
</feature>
<feature type="compositionally biased region" description="Polar residues" evidence="2">
    <location>
        <begin position="481"/>
        <end position="490"/>
    </location>
</feature>
<feature type="modified residue" description="Phosphoserine" evidence="7">
    <location>
        <position position="278"/>
    </location>
</feature>
<feature type="splice variant" id="VSP_023990" description="In isoform 2." evidence="4 5">
    <original>REERP</original>
    <variation>ATSPC</variation>
    <location>
        <begin position="281"/>
        <end position="285"/>
    </location>
</feature>
<feature type="splice variant" id="VSP_023991" description="In isoform 2." evidence="4 5">
    <location>
        <begin position="286"/>
        <end position="519"/>
    </location>
</feature>
<feature type="sequence variant" id="VAR_047357" description="In dbSNP:rs6707475." evidence="3">
    <original>A</original>
    <variation>V</variation>
    <location>
        <position position="28"/>
    </location>
</feature>
<feature type="sequence variant" id="VAR_047358" description="In dbSNP:rs35852562.">
    <original>T</original>
    <variation>P</variation>
    <location>
        <position position="205"/>
    </location>
</feature>
<feature type="sequence conflict" description="In Ref. 1; BAB14272." evidence="6" ref="1">
    <original>L</original>
    <variation>P</variation>
    <location>
        <position position="141"/>
    </location>
</feature>
<feature type="sequence conflict" description="In Ref. 3; AAH36017." evidence="6" ref="3">
    <original>P</original>
    <variation>T</variation>
    <location>
        <position position="216"/>
    </location>
</feature>
<feature type="sequence conflict" description="In Ref. 3; AAH36017." evidence="6" ref="3">
    <original>R</original>
    <variation>H</variation>
    <location>
        <position position="413"/>
    </location>
</feature>